<accession>C0Q329</accession>
<sequence length="239" mass="26977">MVIKAQSPAGFAEEYIIESIWNNRFPPGTILPAERELSELIGVTRTTLREVLQRLARDGWLTIQHGKPTKVNNFWETSGLNILETLARLDHESVPQLIDNLLSVRTNISTIFIRTALRQHPDKAQEVLATAHEVADHADAFADLDYNIFRGLAFASGNPIYGLILNGMKGLYTRIGRHYFANSEARSLALGFYHKLSSLCEQGAHDQVYETVRRYGHDSGEIWHRMQKNLPGDLAIQGR</sequence>
<dbReference type="EMBL" id="CP000857">
    <property type="protein sequence ID" value="ACN46061.1"/>
    <property type="molecule type" value="Genomic_DNA"/>
</dbReference>
<dbReference type="RefSeq" id="WP_000234827.1">
    <property type="nucleotide sequence ID" value="NC_012125.1"/>
</dbReference>
<dbReference type="SMR" id="C0Q329"/>
<dbReference type="KEGG" id="sei:SPC_1924"/>
<dbReference type="HOGENOM" id="CLU_017584_9_4_6"/>
<dbReference type="Proteomes" id="UP000001599">
    <property type="component" value="Chromosome"/>
</dbReference>
<dbReference type="GO" id="GO:0005737">
    <property type="term" value="C:cytoplasm"/>
    <property type="evidence" value="ECO:0007669"/>
    <property type="project" value="UniProtKB-SubCell"/>
</dbReference>
<dbReference type="GO" id="GO:0003677">
    <property type="term" value="F:DNA binding"/>
    <property type="evidence" value="ECO:0007669"/>
    <property type="project" value="UniProtKB-KW"/>
</dbReference>
<dbReference type="GO" id="GO:0003700">
    <property type="term" value="F:DNA-binding transcription factor activity"/>
    <property type="evidence" value="ECO:0007669"/>
    <property type="project" value="UniProtKB-UniRule"/>
</dbReference>
<dbReference type="GO" id="GO:0000062">
    <property type="term" value="F:fatty-acyl-CoA binding"/>
    <property type="evidence" value="ECO:0007669"/>
    <property type="project" value="InterPro"/>
</dbReference>
<dbReference type="GO" id="GO:0006631">
    <property type="term" value="P:fatty acid metabolic process"/>
    <property type="evidence" value="ECO:0007669"/>
    <property type="project" value="UniProtKB-KW"/>
</dbReference>
<dbReference type="GO" id="GO:0019217">
    <property type="term" value="P:regulation of fatty acid metabolic process"/>
    <property type="evidence" value="ECO:0007669"/>
    <property type="project" value="UniProtKB-UniRule"/>
</dbReference>
<dbReference type="CDD" id="cd07377">
    <property type="entry name" value="WHTH_GntR"/>
    <property type="match status" value="1"/>
</dbReference>
<dbReference type="FunFam" id="1.10.10.10:FF:000036">
    <property type="entry name" value="Fatty acid metabolism regulator protein"/>
    <property type="match status" value="1"/>
</dbReference>
<dbReference type="FunFam" id="1.20.120.530:FF:000003">
    <property type="entry name" value="Fatty acid metabolism regulator protein"/>
    <property type="match status" value="1"/>
</dbReference>
<dbReference type="Gene3D" id="1.20.120.530">
    <property type="entry name" value="GntR ligand-binding domain-like"/>
    <property type="match status" value="1"/>
</dbReference>
<dbReference type="Gene3D" id="1.10.10.10">
    <property type="entry name" value="Winged helix-like DNA-binding domain superfamily/Winged helix DNA-binding domain"/>
    <property type="match status" value="1"/>
</dbReference>
<dbReference type="HAMAP" id="MF_00696">
    <property type="entry name" value="HTH_FadR"/>
    <property type="match status" value="1"/>
</dbReference>
<dbReference type="InterPro" id="IPR014178">
    <property type="entry name" value="FA-response_TF_FadR"/>
</dbReference>
<dbReference type="InterPro" id="IPR028374">
    <property type="entry name" value="FadR_C"/>
</dbReference>
<dbReference type="InterPro" id="IPR008920">
    <property type="entry name" value="TF_FadR/GntR_C"/>
</dbReference>
<dbReference type="InterPro" id="IPR000524">
    <property type="entry name" value="Tscrpt_reg_HTH_GntR"/>
</dbReference>
<dbReference type="InterPro" id="IPR036388">
    <property type="entry name" value="WH-like_DNA-bd_sf"/>
</dbReference>
<dbReference type="InterPro" id="IPR036390">
    <property type="entry name" value="WH_DNA-bd_sf"/>
</dbReference>
<dbReference type="NCBIfam" id="TIGR02812">
    <property type="entry name" value="fadR_gamma"/>
    <property type="match status" value="1"/>
</dbReference>
<dbReference type="NCBIfam" id="NF003444">
    <property type="entry name" value="PRK04984.1"/>
    <property type="match status" value="1"/>
</dbReference>
<dbReference type="PANTHER" id="PTHR43537:SF52">
    <property type="entry name" value="FATTY ACID METABOLISM REGULATOR PROTEIN"/>
    <property type="match status" value="1"/>
</dbReference>
<dbReference type="PANTHER" id="PTHR43537">
    <property type="entry name" value="TRANSCRIPTIONAL REGULATOR, GNTR FAMILY"/>
    <property type="match status" value="1"/>
</dbReference>
<dbReference type="Pfam" id="PF07840">
    <property type="entry name" value="FadR_C"/>
    <property type="match status" value="1"/>
</dbReference>
<dbReference type="Pfam" id="PF00392">
    <property type="entry name" value="GntR"/>
    <property type="match status" value="1"/>
</dbReference>
<dbReference type="PRINTS" id="PR00035">
    <property type="entry name" value="HTHGNTR"/>
</dbReference>
<dbReference type="SMART" id="SM00345">
    <property type="entry name" value="HTH_GNTR"/>
    <property type="match status" value="1"/>
</dbReference>
<dbReference type="SUPFAM" id="SSF48008">
    <property type="entry name" value="GntR ligand-binding domain-like"/>
    <property type="match status" value="1"/>
</dbReference>
<dbReference type="SUPFAM" id="SSF46785">
    <property type="entry name" value="Winged helix' DNA-binding domain"/>
    <property type="match status" value="1"/>
</dbReference>
<dbReference type="PROSITE" id="PS50949">
    <property type="entry name" value="HTH_GNTR"/>
    <property type="match status" value="1"/>
</dbReference>
<comment type="function">
    <text evidence="1">Multifunctional regulator of fatty acid metabolism.</text>
</comment>
<comment type="subunit">
    <text evidence="1">Homodimer.</text>
</comment>
<comment type="subcellular location">
    <subcellularLocation>
        <location evidence="1">Cytoplasm</location>
    </subcellularLocation>
</comment>
<feature type="chain" id="PRO_1000201045" description="Fatty acid metabolism regulator protein">
    <location>
        <begin position="1"/>
        <end position="239"/>
    </location>
</feature>
<feature type="domain" description="HTH gntR-type" evidence="1">
    <location>
        <begin position="6"/>
        <end position="74"/>
    </location>
</feature>
<feature type="DNA-binding region" description="H-T-H motif" evidence="1">
    <location>
        <begin position="34"/>
        <end position="53"/>
    </location>
</feature>
<gene>
    <name evidence="1" type="primary">fadR</name>
    <name type="ordered locus">SPC_1924</name>
</gene>
<proteinExistence type="inferred from homology"/>
<name>FADR_SALPC</name>
<evidence type="ECO:0000255" key="1">
    <source>
        <dbReference type="HAMAP-Rule" id="MF_00696"/>
    </source>
</evidence>
<reference key="1">
    <citation type="journal article" date="2009" name="PLoS ONE">
        <title>Salmonella paratyphi C: genetic divergence from Salmonella choleraesuis and pathogenic convergence with Salmonella typhi.</title>
        <authorList>
            <person name="Liu W.-Q."/>
            <person name="Feng Y."/>
            <person name="Wang Y."/>
            <person name="Zou Q.-H."/>
            <person name="Chen F."/>
            <person name="Guo J.-T."/>
            <person name="Peng Y.-H."/>
            <person name="Jin Y."/>
            <person name="Li Y.-G."/>
            <person name="Hu S.-N."/>
            <person name="Johnston R.N."/>
            <person name="Liu G.-R."/>
            <person name="Liu S.-L."/>
        </authorList>
    </citation>
    <scope>NUCLEOTIDE SEQUENCE [LARGE SCALE GENOMIC DNA]</scope>
    <source>
        <strain>RKS4594</strain>
    </source>
</reference>
<keyword id="KW-0010">Activator</keyword>
<keyword id="KW-0963">Cytoplasm</keyword>
<keyword id="KW-0238">DNA-binding</keyword>
<keyword id="KW-0276">Fatty acid metabolism</keyword>
<keyword id="KW-0443">Lipid metabolism</keyword>
<keyword id="KW-0678">Repressor</keyword>
<keyword id="KW-0804">Transcription</keyword>
<keyword id="KW-0805">Transcription regulation</keyword>
<organism>
    <name type="scientific">Salmonella paratyphi C (strain RKS4594)</name>
    <dbReference type="NCBI Taxonomy" id="476213"/>
    <lineage>
        <taxon>Bacteria</taxon>
        <taxon>Pseudomonadati</taxon>
        <taxon>Pseudomonadota</taxon>
        <taxon>Gammaproteobacteria</taxon>
        <taxon>Enterobacterales</taxon>
        <taxon>Enterobacteriaceae</taxon>
        <taxon>Salmonella</taxon>
    </lineage>
</organism>
<protein>
    <recommendedName>
        <fullName evidence="1">Fatty acid metabolism regulator protein</fullName>
    </recommendedName>
</protein>